<gene>
    <name type="ordered locus">PM0112</name>
</gene>
<protein>
    <recommendedName>
        <fullName evidence="1">Pyridoxal phosphate homeostasis protein</fullName>
        <shortName evidence="1">PLP homeostasis protein</shortName>
    </recommendedName>
</protein>
<keyword id="KW-0663">Pyridoxal phosphate</keyword>
<keyword id="KW-1185">Reference proteome</keyword>
<sequence>MTIEQNLAQIQQNIQHAVQQAKRPESAVKLLAVSKTKPVEDIYQAYQAGQTAFGENYVQEGVEKIQYFAQKNIPLEWHFIGPLQSNKTKLVAEHFDWMQTLDRKKIADRLNEQRPHYKKPLNVLIQINISDEDSKSGIQPNEMLDLAKQIQNLPHLCLRGLMAIPAPTDDLATQEQAFTQMHSLFEQLKQALPDAQIDTLSMGMTDDMASAIQCGSTMVRIGTAIFGARDYSK</sequence>
<proteinExistence type="inferred from homology"/>
<dbReference type="EMBL" id="AE004439">
    <property type="protein sequence ID" value="AAK02196.1"/>
    <property type="molecule type" value="Genomic_DNA"/>
</dbReference>
<dbReference type="RefSeq" id="WP_010906490.1">
    <property type="nucleotide sequence ID" value="NC_002663.1"/>
</dbReference>
<dbReference type="SMR" id="Q9CPD5"/>
<dbReference type="STRING" id="272843.PM0112"/>
<dbReference type="EnsemblBacteria" id="AAK02196">
    <property type="protein sequence ID" value="AAK02196"/>
    <property type="gene ID" value="PM0112"/>
</dbReference>
<dbReference type="KEGG" id="pmu:PM0112"/>
<dbReference type="PATRIC" id="fig|272843.6.peg.116"/>
<dbReference type="HOGENOM" id="CLU_059988_0_1_6"/>
<dbReference type="OrthoDB" id="9804072at2"/>
<dbReference type="Proteomes" id="UP000000809">
    <property type="component" value="Chromosome"/>
</dbReference>
<dbReference type="GO" id="GO:0030170">
    <property type="term" value="F:pyridoxal phosphate binding"/>
    <property type="evidence" value="ECO:0007669"/>
    <property type="project" value="UniProtKB-UniRule"/>
</dbReference>
<dbReference type="CDD" id="cd06824">
    <property type="entry name" value="PLPDE_III_Yggs_like"/>
    <property type="match status" value="1"/>
</dbReference>
<dbReference type="FunFam" id="3.20.20.10:FF:000004">
    <property type="entry name" value="Pyridoxal phosphate homeostasis protein"/>
    <property type="match status" value="1"/>
</dbReference>
<dbReference type="Gene3D" id="3.20.20.10">
    <property type="entry name" value="Alanine racemase"/>
    <property type="match status" value="1"/>
</dbReference>
<dbReference type="HAMAP" id="MF_02087">
    <property type="entry name" value="PLP_homeostasis"/>
    <property type="match status" value="1"/>
</dbReference>
<dbReference type="InterPro" id="IPR001608">
    <property type="entry name" value="Ala_racemase_N"/>
</dbReference>
<dbReference type="InterPro" id="IPR029066">
    <property type="entry name" value="PLP-binding_barrel"/>
</dbReference>
<dbReference type="InterPro" id="IPR011078">
    <property type="entry name" value="PyrdxlP_homeostasis"/>
</dbReference>
<dbReference type="NCBIfam" id="TIGR00044">
    <property type="entry name" value="YggS family pyridoxal phosphate-dependent enzyme"/>
    <property type="match status" value="1"/>
</dbReference>
<dbReference type="PANTHER" id="PTHR10146">
    <property type="entry name" value="PROLINE SYNTHETASE CO-TRANSCRIBED BACTERIAL HOMOLOG PROTEIN"/>
    <property type="match status" value="1"/>
</dbReference>
<dbReference type="PANTHER" id="PTHR10146:SF14">
    <property type="entry name" value="PYRIDOXAL PHOSPHATE HOMEOSTASIS PROTEIN"/>
    <property type="match status" value="1"/>
</dbReference>
<dbReference type="Pfam" id="PF01168">
    <property type="entry name" value="Ala_racemase_N"/>
    <property type="match status" value="1"/>
</dbReference>
<dbReference type="PIRSF" id="PIRSF004848">
    <property type="entry name" value="YBL036c_PLPDEIII"/>
    <property type="match status" value="1"/>
</dbReference>
<dbReference type="SUPFAM" id="SSF51419">
    <property type="entry name" value="PLP-binding barrel"/>
    <property type="match status" value="1"/>
</dbReference>
<dbReference type="PROSITE" id="PS01211">
    <property type="entry name" value="UPF0001"/>
    <property type="match status" value="1"/>
</dbReference>
<accession>Q9CPD5</accession>
<evidence type="ECO:0000255" key="1">
    <source>
        <dbReference type="HAMAP-Rule" id="MF_02087"/>
    </source>
</evidence>
<feature type="chain" id="PRO_0000163205" description="Pyridoxal phosphate homeostasis protein">
    <location>
        <begin position="1"/>
        <end position="233"/>
    </location>
</feature>
<feature type="modified residue" description="N6-(pyridoxal phosphate)lysine" evidence="1">
    <location>
        <position position="35"/>
    </location>
</feature>
<name>PLPHP_PASMU</name>
<organism>
    <name type="scientific">Pasteurella multocida (strain Pm70)</name>
    <dbReference type="NCBI Taxonomy" id="272843"/>
    <lineage>
        <taxon>Bacteria</taxon>
        <taxon>Pseudomonadati</taxon>
        <taxon>Pseudomonadota</taxon>
        <taxon>Gammaproteobacteria</taxon>
        <taxon>Pasteurellales</taxon>
        <taxon>Pasteurellaceae</taxon>
        <taxon>Pasteurella</taxon>
    </lineage>
</organism>
<reference key="1">
    <citation type="journal article" date="2001" name="Proc. Natl. Acad. Sci. U.S.A.">
        <title>Complete genomic sequence of Pasteurella multocida Pm70.</title>
        <authorList>
            <person name="May B.J."/>
            <person name="Zhang Q."/>
            <person name="Li L.L."/>
            <person name="Paustian M.L."/>
            <person name="Whittam T.S."/>
            <person name="Kapur V."/>
        </authorList>
    </citation>
    <scope>NUCLEOTIDE SEQUENCE [LARGE SCALE GENOMIC DNA]</scope>
    <source>
        <strain>Pm70</strain>
    </source>
</reference>
<comment type="function">
    <text evidence="1">Pyridoxal 5'-phosphate (PLP)-binding protein, which is involved in PLP homeostasis.</text>
</comment>
<comment type="similarity">
    <text evidence="1">Belongs to the pyridoxal phosphate-binding protein YggS/PROSC family.</text>
</comment>